<protein>
    <recommendedName>
        <fullName evidence="11">Centriole and centriolar satellite protein OFD1</fullName>
    </recommendedName>
    <alternativeName>
        <fullName>Oral-facial-digital syndrome 1 protein homolog</fullName>
    </alternativeName>
</protein>
<reference key="1">
    <citation type="journal article" date="2003" name="Genomics">
        <title>Characterization of the OFD1/Ofd1 genes on the human and mouse sex chromosomes and exclusion of Ofd1 for the Xpl mouse mutant.</title>
        <authorList>
            <person name="Ferrante M.I."/>
            <person name="Barra A."/>
            <person name="Truong J.P."/>
            <person name="Banfi S."/>
            <person name="Disteche C.M."/>
            <person name="Franco B."/>
        </authorList>
    </citation>
    <scope>NUCLEOTIDE SEQUENCE [MRNA]</scope>
    <source>
        <strain>C57BL/6J</strain>
    </source>
</reference>
<reference key="2">
    <citation type="journal article" date="2004" name="Genome Res.">
        <title>The status, quality, and expansion of the NIH full-length cDNA project: the Mammalian Gene Collection (MGC).</title>
        <authorList>
            <consortium name="The MGC Project Team"/>
        </authorList>
    </citation>
    <scope>NUCLEOTIDE SEQUENCE [LARGE SCALE MRNA]</scope>
    <source>
        <tissue>Brain</tissue>
    </source>
</reference>
<reference key="3">
    <citation type="journal article" date="2006" name="Nat. Genet.">
        <title>Oral-facial-digital type I protein is required for primary cilia formation and left-right axis specification.</title>
        <authorList>
            <person name="Ferrante M.I."/>
            <person name="Zullo A."/>
            <person name="Barra A."/>
            <person name="Bimonte S."/>
            <person name="Messaddeq N."/>
            <person name="Studer M."/>
            <person name="Dolle P."/>
            <person name="Franco B."/>
        </authorList>
    </citation>
    <scope>DISRUPTION PHENOTYPE</scope>
</reference>
<reference key="4">
    <citation type="journal article" date="2008" name="Nat. Cell Biol.">
        <title>Kif3a constrains beta-catenin-dependent Wnt signalling through dual ciliary and non-ciliary mechanisms.</title>
        <authorList>
            <person name="Corbit K.C."/>
            <person name="Shyer A.E."/>
            <person name="Dowdle W.E."/>
            <person name="Gaulden J."/>
            <person name="Singla V."/>
            <person name="Chen M.H."/>
            <person name="Chuang P.T."/>
            <person name="Reiter J.F."/>
        </authorList>
    </citation>
    <scope>FUNCTION</scope>
</reference>
<reference key="5">
    <citation type="journal article" date="2010" name="Cell">
        <title>A tissue-specific atlas of mouse protein phosphorylation and expression.</title>
        <authorList>
            <person name="Huttlin E.L."/>
            <person name="Jedrychowski M.P."/>
            <person name="Elias J.E."/>
            <person name="Goswami T."/>
            <person name="Rad R."/>
            <person name="Beausoleil S.A."/>
            <person name="Villen J."/>
            <person name="Haas W."/>
            <person name="Sowa M.E."/>
            <person name="Gygi S.P."/>
        </authorList>
    </citation>
    <scope>PHOSPHORYLATION [LARGE SCALE ANALYSIS] AT SER-670; SER-747 AND SER-791</scope>
    <scope>IDENTIFICATION BY MASS SPECTROMETRY [LARGE SCALE ANALYSIS]</scope>
    <source>
        <tissue>Lung</tissue>
        <tissue>Pancreas</tissue>
        <tissue>Testis</tissue>
    </source>
</reference>
<reference key="6">
    <citation type="journal article" date="2010" name="Dev. Cell">
        <title>Ofd1, a human disease gene, regulates the length and distal structure of centrioles.</title>
        <authorList>
            <person name="Singla V."/>
            <person name="Romaguera-Ros M."/>
            <person name="Garcia-Verdugo J.M."/>
            <person name="Reiter J.F."/>
        </authorList>
    </citation>
    <scope>FUNCTION</scope>
    <scope>SUBCELLULAR LOCATION</scope>
    <scope>MUTAGENESIS OF SER-73; ALA-78; GLY-137; 358-LYS--ASP-360 AND SER-435</scope>
</reference>
<reference key="7">
    <citation type="journal article" date="2013" name="Nature">
        <title>Autophagy promotes primary ciliogenesis by removing OFD1 from centriolar satellites.</title>
        <authorList>
            <person name="Tang Z."/>
            <person name="Lin M.G."/>
            <person name="Stowe T.R."/>
            <person name="Chen S."/>
            <person name="Zhu M."/>
            <person name="Stearns T."/>
            <person name="Franco B."/>
            <person name="Zhong Q."/>
        </authorList>
    </citation>
    <scope>SUBCELLULAR LOCATION</scope>
</reference>
<reference key="8">
    <citation type="journal article" date="2016" name="Hum. Mol. Genet.">
        <title>OFIP/KIAA0753 forms a complex with OFD1 and FOR20 at pericentriolar satellites and centrosomes and is mutated in one individual with oral-facial-digital syndrome.</title>
        <authorList>
            <person name="Chevrier V."/>
            <person name="Bruel A.L."/>
            <person name="Van Dam T.J."/>
            <person name="Franco B."/>
            <person name="Lo Scalzo M."/>
            <person name="Lembo F."/>
            <person name="Audebert S."/>
            <person name="Baudelet E."/>
            <person name="Isnardon D."/>
            <person name="Bole A."/>
            <person name="Borg J.P."/>
            <person name="Kuentz P."/>
            <person name="Thevenon J."/>
            <person name="Burglen L."/>
            <person name="Faivre L."/>
            <person name="Riviere J.B."/>
            <person name="Huynen M.A."/>
            <person name="Birnbaum D."/>
            <person name="Rosnet O."/>
            <person name="Thauvin-Robinet C."/>
        </authorList>
    </citation>
    <scope>INTERACTION WITH CEP20; KIAA0753 AND PCM1</scope>
</reference>
<keyword id="KW-0966">Cell projection</keyword>
<keyword id="KW-0969">Cilium</keyword>
<keyword id="KW-0970">Cilium biogenesis/degradation</keyword>
<keyword id="KW-0175">Coiled coil</keyword>
<keyword id="KW-0963">Cytoplasm</keyword>
<keyword id="KW-0206">Cytoskeleton</keyword>
<keyword id="KW-0539">Nucleus</keyword>
<keyword id="KW-0597">Phosphoprotein</keyword>
<keyword id="KW-1185">Reference proteome</keyword>
<keyword id="KW-0832">Ubl conjugation</keyword>
<evidence type="ECO:0000250" key="1"/>
<evidence type="ECO:0000250" key="2">
    <source>
        <dbReference type="UniProtKB" id="O75665"/>
    </source>
</evidence>
<evidence type="ECO:0000255" key="3"/>
<evidence type="ECO:0000255" key="4">
    <source>
        <dbReference type="PROSITE-ProRule" id="PRU00126"/>
    </source>
</evidence>
<evidence type="ECO:0000256" key="5">
    <source>
        <dbReference type="SAM" id="MobiDB-lite"/>
    </source>
</evidence>
<evidence type="ECO:0000269" key="6">
    <source>
    </source>
</evidence>
<evidence type="ECO:0000269" key="7">
    <source>
    </source>
</evidence>
<evidence type="ECO:0000269" key="8">
    <source>
    </source>
</evidence>
<evidence type="ECO:0000269" key="9">
    <source>
    </source>
</evidence>
<evidence type="ECO:0000269" key="10">
    <source>
    </source>
</evidence>
<evidence type="ECO:0000305" key="11"/>
<evidence type="ECO:0007744" key="12">
    <source>
    </source>
</evidence>
<name>OFD1_MOUSE</name>
<organism>
    <name type="scientific">Mus musculus</name>
    <name type="common">Mouse</name>
    <dbReference type="NCBI Taxonomy" id="10090"/>
    <lineage>
        <taxon>Eukaryota</taxon>
        <taxon>Metazoa</taxon>
        <taxon>Chordata</taxon>
        <taxon>Craniata</taxon>
        <taxon>Vertebrata</taxon>
        <taxon>Euteleostomi</taxon>
        <taxon>Mammalia</taxon>
        <taxon>Eutheria</taxon>
        <taxon>Euarchontoglires</taxon>
        <taxon>Glires</taxon>
        <taxon>Rodentia</taxon>
        <taxon>Myomorpha</taxon>
        <taxon>Muroidea</taxon>
        <taxon>Muridae</taxon>
        <taxon>Murinae</taxon>
        <taxon>Mus</taxon>
        <taxon>Mus</taxon>
    </lineage>
</organism>
<accession>Q80Z25</accession>
<gene>
    <name type="primary">Ofd1</name>
</gene>
<dbReference type="EMBL" id="AJ438159">
    <property type="protein sequence ID" value="CAD27225.1"/>
    <property type="molecule type" value="mRNA"/>
</dbReference>
<dbReference type="EMBL" id="BC119070">
    <property type="protein sequence ID" value="AAI19071.1"/>
    <property type="molecule type" value="mRNA"/>
</dbReference>
<dbReference type="EMBL" id="BC120487">
    <property type="protein sequence ID" value="AAI20488.1"/>
    <property type="molecule type" value="mRNA"/>
</dbReference>
<dbReference type="CCDS" id="CCDS53248.1"/>
<dbReference type="RefSeq" id="NP_803178.3">
    <property type="nucleotide sequence ID" value="NM_177429.4"/>
</dbReference>
<dbReference type="SMR" id="Q80Z25"/>
<dbReference type="BioGRID" id="231852">
    <property type="interactions" value="4"/>
</dbReference>
<dbReference type="FunCoup" id="Q80Z25">
    <property type="interactions" value="1066"/>
</dbReference>
<dbReference type="IntAct" id="Q80Z25">
    <property type="interactions" value="1"/>
</dbReference>
<dbReference type="STRING" id="10090.ENSMUSP00000041744"/>
<dbReference type="GlyGen" id="Q80Z25">
    <property type="glycosylation" value="1 site, 1 O-linked glycan (1 site)"/>
</dbReference>
<dbReference type="iPTMnet" id="Q80Z25"/>
<dbReference type="PhosphoSitePlus" id="Q80Z25"/>
<dbReference type="jPOST" id="Q80Z25"/>
<dbReference type="PaxDb" id="10090-ENSMUSP00000041744"/>
<dbReference type="ProteomicsDB" id="294271"/>
<dbReference type="Pumba" id="Q80Z25"/>
<dbReference type="DNASU" id="237222"/>
<dbReference type="Ensembl" id="ENSMUST00000049501.10">
    <property type="protein sequence ID" value="ENSMUSP00000041744.10"/>
    <property type="gene ID" value="ENSMUSG00000040586.9"/>
</dbReference>
<dbReference type="GeneID" id="237222"/>
<dbReference type="KEGG" id="mmu:237222"/>
<dbReference type="AGR" id="MGI:1350328"/>
<dbReference type="CTD" id="8481"/>
<dbReference type="MGI" id="MGI:1350328">
    <property type="gene designation" value="Ofd1"/>
</dbReference>
<dbReference type="eggNOG" id="ENOG502S109">
    <property type="taxonomic scope" value="Eukaryota"/>
</dbReference>
<dbReference type="GeneTree" id="ENSGT00390000001798"/>
<dbReference type="InParanoid" id="Q80Z25"/>
<dbReference type="OrthoDB" id="206339at2759"/>
<dbReference type="Reactome" id="R-MMU-2565942">
    <property type="pathway name" value="Regulation of PLK1 Activity at G2/M Transition"/>
</dbReference>
<dbReference type="Reactome" id="R-MMU-380259">
    <property type="pathway name" value="Loss of Nlp from mitotic centrosomes"/>
</dbReference>
<dbReference type="Reactome" id="R-MMU-380270">
    <property type="pathway name" value="Recruitment of mitotic centrosome proteins and complexes"/>
</dbReference>
<dbReference type="Reactome" id="R-MMU-380284">
    <property type="pathway name" value="Loss of proteins required for interphase microtubule organization from the centrosome"/>
</dbReference>
<dbReference type="Reactome" id="R-MMU-380320">
    <property type="pathway name" value="Recruitment of NuMA to mitotic centrosomes"/>
</dbReference>
<dbReference type="Reactome" id="R-MMU-5610787">
    <property type="pathway name" value="Hedgehog 'off' state"/>
</dbReference>
<dbReference type="Reactome" id="R-MMU-5620912">
    <property type="pathway name" value="Anchoring of the basal body to the plasma membrane"/>
</dbReference>
<dbReference type="Reactome" id="R-MMU-8854518">
    <property type="pathway name" value="AURKA Activation by TPX2"/>
</dbReference>
<dbReference type="BioGRID-ORCS" id="237222">
    <property type="hits" value="6 hits in 79 CRISPR screens"/>
</dbReference>
<dbReference type="ChiTaRS" id="Ofd1">
    <property type="organism name" value="mouse"/>
</dbReference>
<dbReference type="PRO" id="PR:Q80Z25"/>
<dbReference type="Proteomes" id="UP000000589">
    <property type="component" value="Chromosome X"/>
</dbReference>
<dbReference type="RNAct" id="Q80Z25">
    <property type="molecule type" value="protein"/>
</dbReference>
<dbReference type="GO" id="GO:0034451">
    <property type="term" value="C:centriolar satellite"/>
    <property type="evidence" value="ECO:0000314"/>
    <property type="project" value="UniProtKB"/>
</dbReference>
<dbReference type="GO" id="GO:0005814">
    <property type="term" value="C:centriole"/>
    <property type="evidence" value="ECO:0000314"/>
    <property type="project" value="UniProtKB"/>
</dbReference>
<dbReference type="GO" id="GO:0005813">
    <property type="term" value="C:centrosome"/>
    <property type="evidence" value="ECO:0000266"/>
    <property type="project" value="MGI"/>
</dbReference>
<dbReference type="GO" id="GO:0036064">
    <property type="term" value="C:ciliary basal body"/>
    <property type="evidence" value="ECO:0000314"/>
    <property type="project" value="UniProtKB"/>
</dbReference>
<dbReference type="GO" id="GO:0005929">
    <property type="term" value="C:cilium"/>
    <property type="evidence" value="ECO:0000314"/>
    <property type="project" value="UniProtKB"/>
</dbReference>
<dbReference type="GO" id="GO:0005737">
    <property type="term" value="C:cytoplasm"/>
    <property type="evidence" value="ECO:0007669"/>
    <property type="project" value="UniProtKB-KW"/>
</dbReference>
<dbReference type="GO" id="GO:0005576">
    <property type="term" value="C:extracellular region"/>
    <property type="evidence" value="ECO:0007669"/>
    <property type="project" value="GOC"/>
</dbReference>
<dbReference type="GO" id="GO:0005634">
    <property type="term" value="C:nucleus"/>
    <property type="evidence" value="ECO:0007669"/>
    <property type="project" value="UniProtKB-SubCell"/>
</dbReference>
<dbReference type="GO" id="GO:0043014">
    <property type="term" value="F:alpha-tubulin binding"/>
    <property type="evidence" value="ECO:0000314"/>
    <property type="project" value="UniProtKB"/>
</dbReference>
<dbReference type="GO" id="GO:0043015">
    <property type="term" value="F:gamma-tubulin binding"/>
    <property type="evidence" value="ECO:0000314"/>
    <property type="project" value="UniProtKB"/>
</dbReference>
<dbReference type="GO" id="GO:0042802">
    <property type="term" value="F:identical protein binding"/>
    <property type="evidence" value="ECO:0007669"/>
    <property type="project" value="Ensembl"/>
</dbReference>
<dbReference type="GO" id="GO:0060090">
    <property type="term" value="F:molecular adaptor activity"/>
    <property type="evidence" value="ECO:0007669"/>
    <property type="project" value="Ensembl"/>
</dbReference>
<dbReference type="GO" id="GO:0035082">
    <property type="term" value="P:axoneme assembly"/>
    <property type="evidence" value="ECO:0000315"/>
    <property type="project" value="MGI"/>
</dbReference>
<dbReference type="GO" id="GO:0060271">
    <property type="term" value="P:cilium assembly"/>
    <property type="evidence" value="ECO:0000314"/>
    <property type="project" value="UniProtKB"/>
</dbReference>
<dbReference type="GO" id="GO:0010172">
    <property type="term" value="P:embryonic body morphogenesis"/>
    <property type="evidence" value="ECO:0000315"/>
    <property type="project" value="UniProtKB"/>
</dbReference>
<dbReference type="GO" id="GO:0060287">
    <property type="term" value="P:epithelial cilium movement involved in determination of left/right asymmetry"/>
    <property type="evidence" value="ECO:0000315"/>
    <property type="project" value="UniProtKB"/>
</dbReference>
<dbReference type="GO" id="GO:2000314">
    <property type="term" value="P:negative regulation of fibroblast growth factor receptor signaling pathway involved in neural plate anterior/posterior pattern formation"/>
    <property type="evidence" value="ECO:0000315"/>
    <property type="project" value="UniProtKB"/>
</dbReference>
<dbReference type="InterPro" id="IPR006594">
    <property type="entry name" value="LisH"/>
</dbReference>
<dbReference type="InterPro" id="IPR055289">
    <property type="entry name" value="OFD1"/>
</dbReference>
<dbReference type="PANTHER" id="PTHR39063:SF1">
    <property type="entry name" value="OFD1 CENTRIOLE AND CENTRIOLAR SATELLITE PROTEIN"/>
    <property type="match status" value="1"/>
</dbReference>
<dbReference type="PANTHER" id="PTHR39063">
    <property type="entry name" value="ORAL-FACIAL-DIGITAL SYNDROME 1 PROTEIN HOMOLOG"/>
    <property type="match status" value="1"/>
</dbReference>
<dbReference type="Pfam" id="PF16045">
    <property type="entry name" value="LisH_2"/>
    <property type="match status" value="1"/>
</dbReference>
<dbReference type="SMART" id="SM00667">
    <property type="entry name" value="LisH"/>
    <property type="match status" value="1"/>
</dbReference>
<dbReference type="PROSITE" id="PS50896">
    <property type="entry name" value="LISH"/>
    <property type="match status" value="1"/>
</dbReference>
<comment type="function">
    <text evidence="7 8">Component of the centrioles controlling mother and daughter centrioles length. Recruits to the centriole IFT88 and centriole distal appendage-specific proteins including CEP164. Involved in the biogenesis of the cilium, a centriole-associated function. The cilium is a cell surface projection found in many vertebrate cells required to transduce signals important for development and tissue homeostasis. Plays an important role in development by regulating Wnt signaling and the specification of the left-right axis. Only OFD1 localized at the centriolar satellites is removed by autophagy, which is an important step in the ciliogenesis regulation.</text>
</comment>
<comment type="subunit">
    <text evidence="2 10">Homooligomer. Interacts with LCA5. Interacts with RUVBL1; the interaction is direct and may mediate interaction with the NuA4 histone acetyltransferase complex. Interacts with SDCCAG8; the interaction is direct. Interacts with MAP1LC3B. Interacts with C2CD3; OFD1 may act as a negative regulator of C2CD3. Forms a complex with KIAA0753/OFIP and CEP20/FOR20; the interaction with CEP20 is detected only in the presence of KIAA0753. Interacts with PCM1; this interaction may be mediated by KIAA0753/OFIP (PubMed:26643951). Interacts with TBC1D31; regulates OFD1 activity in cilium assembly (By similarity).</text>
</comment>
<comment type="subcellular location">
    <subcellularLocation>
        <location evidence="8">Cytoplasm</location>
        <location evidence="8">Cytoskeleton</location>
        <location evidence="8">Microtubule organizing center</location>
        <location evidence="8">Centrosome</location>
        <location evidence="8">Centriole</location>
    </subcellularLocation>
    <subcellularLocation>
        <location evidence="9">Cytoplasm</location>
        <location evidence="9">Cytoskeleton</location>
        <location evidence="9">Microtubule organizing center</location>
        <location evidence="9">Centrosome</location>
        <location evidence="9">Centriolar satellite</location>
    </subcellularLocation>
    <subcellularLocation>
        <location evidence="2">Cytoplasm</location>
        <location evidence="2">Cytoskeleton</location>
        <location evidence="2">Cilium basal body</location>
    </subcellularLocation>
    <subcellularLocation>
        <location evidence="2">Nucleus</location>
    </subcellularLocation>
    <text evidence="2">Localizes to centriole distal ends and to centriolar satellites (PubMed:20230748, PubMed:24089205). Localization to centrioles and pericentriolar satellites may be mediated by KIAA0753/OFIP (By similarity).</text>
</comment>
<comment type="PTM">
    <text evidence="2">Phosphorylated. Phosphorylation at Ser-737, by the cAMP-dependent protein kinase PKA, triggers ubiquitination and proteasomal degradation of OFD1. Also increases its interaction with TBC1D31 and regulates its function in ciliogenesis.</text>
</comment>
<comment type="PTM">
    <text evidence="2">Ubiquitinated by PJA2, upon phosphorylation at Ser-737 by PKA, leads to the proteasomal degradation of OFD1.</text>
</comment>
<comment type="disruption phenotype">
    <text evidence="6">Females die at birth and display severe craniofacial and limb abnormalities associated with disorganization of the brain, reduction of the lungs, defects in the great vessels and cystic kidney. Primary cilia are absent on the luminal surface of glomerular and tubular cells of kidneys. Males die earlier during development of the embryo, display failure of left right axis specification associated with a lack of cilia in the embryonic node.</text>
</comment>
<comment type="similarity">
    <text evidence="11">Belongs to the OFD1 family.</text>
</comment>
<proteinExistence type="evidence at protein level"/>
<sequence>MAQSNMPHKSDVLSQDELRKKLYQTFKDRGVLDTLQTQLRNQLIHELMHPVLSGEVKPPSISVEGSALLIGASNSLVADHLQRCGYEYSLSVFFPESGLAKEKIFTMQDLLQLIRINPSSSLYKSLISGFDKENKKGFLMSFLKELAEYYQAKESCDAETQTSTTFPSQVSLAEKFQLIDAQFADGFPHRSKLESLETKLNEYKKEVQHQLQVEMCHKLKYFREAEITKVKMEERRKYEKELAEFQNEFERTCQAKNEALISQEKNSLERIKKHREMESKEIYAQRQLLLNDIALLRGREAELKERIETFELTQKLQEEKIKSEAEALERREQNLKNIEDTYDQKLKTELLKYQLELKDDYITRTNKLLEEERKNKEKTIHLQEELTVINSKKEELSKSVKHMKEVELELESVKAQFLAISKQNHLLNEKVREMSDYSQLKEEKVELQAQNKLLKLQLEETRNENLRLLDRITQPPPELVIFQKELQKTEKAMELEHKDFETHRQALEKQLQSEIENSAQLRTQIAEYDASVKRLTVQVAELKSQLKQTQIALENEVYRNPKHSLIHSLSGLLLSGKMAPHSEDKSGDFLNVPLEQNKVIAGAVMSRVPPYVNTATEASSPESDFEFIASSTKAKVRELEQEAERLEKAFRTYYQRATQNPSTSPQPAKSPPSVNSVAALRSIASSSMDRPVSAEDRVVSEQPLGDMLKEEMSDMSKAFMGSVVSRPRRTSSSTRLSSTPHPKSRRSLDNEMYLEGLGRLHMTSSSPLLDRVSASPAASPSPCPERTAQASPVPSRHSFSGLPEQNACLYQRQTETQDKSELSNVDKQSLKDEKFEPPFRWNKTEQFEAEGLHPAGDMPGIDFAVATQSSRLISYDYPSAVQSQTGEQDEQELWELHMKERRQREEQRHNERQEALERERRELGKLEQERRMIEESLKMEMEEELEKSVQDQKDKSAHCENTLEKYMKIIQQRQEESNADKSSKKSGKECSLVDMMMPSDKDESSPGFSHEEPDDMW</sequence>
<feature type="chain" id="PRO_0000278573" description="Centriole and centriolar satellite protein OFD1">
    <location>
        <begin position="1"/>
        <end position="1017"/>
    </location>
</feature>
<feature type="domain" description="LisH" evidence="4">
    <location>
        <begin position="69"/>
        <end position="101"/>
    </location>
</feature>
<feature type="region of interest" description="Mediates homooligomerization" evidence="1">
    <location>
        <begin position="609"/>
        <end position="666"/>
    </location>
</feature>
<feature type="region of interest" description="Disordered" evidence="5">
    <location>
        <begin position="657"/>
        <end position="676"/>
    </location>
</feature>
<feature type="region of interest" description="Disordered" evidence="5">
    <location>
        <begin position="685"/>
        <end position="705"/>
    </location>
</feature>
<feature type="region of interest" description="Disordered" evidence="5">
    <location>
        <begin position="721"/>
        <end position="749"/>
    </location>
</feature>
<feature type="region of interest" description="Disordered" evidence="5">
    <location>
        <begin position="769"/>
        <end position="801"/>
    </location>
</feature>
<feature type="region of interest" description="Disordered" evidence="5">
    <location>
        <begin position="897"/>
        <end position="1017"/>
    </location>
</feature>
<feature type="coiled-coil region" evidence="3">
    <location>
        <begin position="188"/>
        <end position="557"/>
    </location>
</feature>
<feature type="coiled-coil region" evidence="3">
    <location>
        <begin position="626"/>
        <end position="659"/>
    </location>
</feature>
<feature type="coiled-coil region" evidence="3">
    <location>
        <begin position="895"/>
        <end position="966"/>
    </location>
</feature>
<feature type="compositionally biased region" description="Low complexity" evidence="5">
    <location>
        <begin position="722"/>
        <end position="740"/>
    </location>
</feature>
<feature type="compositionally biased region" description="Basic and acidic residues" evidence="5">
    <location>
        <begin position="897"/>
        <end position="988"/>
    </location>
</feature>
<feature type="modified residue" description="Phosphoserine" evidence="2">
    <location>
        <position position="664"/>
    </location>
</feature>
<feature type="modified residue" description="Phosphoserine" evidence="12">
    <location>
        <position position="670"/>
    </location>
</feature>
<feature type="modified residue" description="Phosphoserine" evidence="2">
    <location>
        <position position="687"/>
    </location>
</feature>
<feature type="modified residue" description="Phosphoserine" evidence="2">
    <location>
        <position position="722"/>
    </location>
</feature>
<feature type="modified residue" description="Phosphoserine" evidence="2">
    <location>
        <position position="737"/>
    </location>
</feature>
<feature type="modified residue" description="Phosphoserine" evidence="12">
    <location>
        <position position="747"/>
    </location>
</feature>
<feature type="modified residue" description="Phosphoserine" evidence="12">
    <location>
        <position position="791"/>
    </location>
</feature>
<feature type="modified residue" description="Phosphoserine" evidence="2">
    <location>
        <position position="823"/>
    </location>
</feature>
<feature type="mutagenesis site" description="Induces centriole elongation. Impaired IFT88 recruitment. Impaired ciliogenesis." evidence="8">
    <original>S</original>
    <variation>A</variation>
    <location>
        <position position="73"/>
    </location>
</feature>
<feature type="mutagenesis site" description="Induces centriole elongation. Impaired CEP164 and IFT88 recruitment. Impaired ciliogenesis." evidence="8">
    <original>A</original>
    <variation>T</variation>
    <location>
        <position position="78"/>
    </location>
</feature>
<feature type="mutagenesis site" description="Induces centriole elongation. Reduced ciliogenesis." evidence="8">
    <original>G</original>
    <variation>S</variation>
    <location>
        <position position="137"/>
    </location>
</feature>
<feature type="mutagenesis site" description="Shortened centrioles. Reduced ciliogenesis." evidence="8">
    <original>KDD</original>
    <variation>FSY</variation>
    <location>
        <begin position="358"/>
        <end position="360"/>
    </location>
</feature>
<feature type="mutagenesis site" description="Induces centriole elongation. Impaired IFT88 recruitment. Reduced ciliogenesis." evidence="8">
    <original>S</original>
    <variation>R</variation>
    <location>
        <position position="435"/>
    </location>
</feature>